<sequence>MTQIHPTAIVSSTAEIHETASIGPYCIVGDNVSIGAGTKLLRHVVVTKNTRIGKNNEIFQFASIGEDCQDLKYNGEETWLEIGDNNSIREACSFHRGTIQDNSLTKIGSNNLFMVNTHIAHDCIVGDGNILANNVGVAGHVHIGNNVILGGNAGVHQFCQIGDYSLVGGGSVILKDVAAMTLVSGNPAQAHGLNIEGMRRKDWSKETINTLRTAYKLIFKSGKTTEEVIEELTQDFLPQEPKVQLLIDSLLSSKRGIIR</sequence>
<name>LPXA_PSYWF</name>
<protein>
    <recommendedName>
        <fullName evidence="1">Acyl-[acyl-carrier-protein]--UDP-N-acetylglucosamine O-acyltransferase</fullName>
        <shortName evidence="1">UDP-N-acetylglucosamine acyltransferase</shortName>
        <ecNumber evidence="1">2.3.1.129</ecNumber>
    </recommendedName>
</protein>
<dbReference type="EC" id="2.3.1.129" evidence="1"/>
<dbReference type="EMBL" id="CP000713">
    <property type="protein sequence ID" value="ABQ94733.1"/>
    <property type="molecule type" value="Genomic_DNA"/>
</dbReference>
<dbReference type="SMR" id="A5WGE2"/>
<dbReference type="STRING" id="349106.PsycPRwf_1793"/>
<dbReference type="KEGG" id="prw:PsycPRwf_1793"/>
<dbReference type="eggNOG" id="COG1043">
    <property type="taxonomic scope" value="Bacteria"/>
</dbReference>
<dbReference type="HOGENOM" id="CLU_061249_0_0_6"/>
<dbReference type="UniPathway" id="UPA00359">
    <property type="reaction ID" value="UER00477"/>
</dbReference>
<dbReference type="GO" id="GO:0005737">
    <property type="term" value="C:cytoplasm"/>
    <property type="evidence" value="ECO:0007669"/>
    <property type="project" value="UniProtKB-SubCell"/>
</dbReference>
<dbReference type="GO" id="GO:0016020">
    <property type="term" value="C:membrane"/>
    <property type="evidence" value="ECO:0007669"/>
    <property type="project" value="GOC"/>
</dbReference>
<dbReference type="GO" id="GO:0008780">
    <property type="term" value="F:acyl-[acyl-carrier-protein]-UDP-N-acetylglucosamine O-acyltransferase activity"/>
    <property type="evidence" value="ECO:0007669"/>
    <property type="project" value="UniProtKB-UniRule"/>
</dbReference>
<dbReference type="GO" id="GO:0009245">
    <property type="term" value="P:lipid A biosynthetic process"/>
    <property type="evidence" value="ECO:0007669"/>
    <property type="project" value="UniProtKB-UniRule"/>
</dbReference>
<dbReference type="CDD" id="cd03351">
    <property type="entry name" value="LbH_UDP-GlcNAc_AT"/>
    <property type="match status" value="1"/>
</dbReference>
<dbReference type="Gene3D" id="2.160.10.10">
    <property type="entry name" value="Hexapeptide repeat proteins"/>
    <property type="match status" value="1"/>
</dbReference>
<dbReference type="Gene3D" id="1.20.1180.10">
    <property type="entry name" value="Udp N-acetylglucosamine O-acyltransferase, C-terminal domain"/>
    <property type="match status" value="1"/>
</dbReference>
<dbReference type="HAMAP" id="MF_00387">
    <property type="entry name" value="LpxA"/>
    <property type="match status" value="1"/>
</dbReference>
<dbReference type="InterPro" id="IPR029098">
    <property type="entry name" value="Acetyltransf_C"/>
</dbReference>
<dbReference type="InterPro" id="IPR037157">
    <property type="entry name" value="Acetyltransf_C_sf"/>
</dbReference>
<dbReference type="InterPro" id="IPR001451">
    <property type="entry name" value="Hexapep"/>
</dbReference>
<dbReference type="InterPro" id="IPR018357">
    <property type="entry name" value="Hexapep_transf_CS"/>
</dbReference>
<dbReference type="InterPro" id="IPR010137">
    <property type="entry name" value="Lipid_A_LpxA"/>
</dbReference>
<dbReference type="InterPro" id="IPR011004">
    <property type="entry name" value="Trimer_LpxA-like_sf"/>
</dbReference>
<dbReference type="NCBIfam" id="TIGR01852">
    <property type="entry name" value="lipid_A_lpxA"/>
    <property type="match status" value="1"/>
</dbReference>
<dbReference type="NCBIfam" id="NF003657">
    <property type="entry name" value="PRK05289.1"/>
    <property type="match status" value="1"/>
</dbReference>
<dbReference type="PANTHER" id="PTHR43480">
    <property type="entry name" value="ACYL-[ACYL-CARRIER-PROTEIN]--UDP-N-ACETYLGLUCOSAMINE O-ACYLTRANSFERASE"/>
    <property type="match status" value="1"/>
</dbReference>
<dbReference type="PANTHER" id="PTHR43480:SF1">
    <property type="entry name" value="ACYL-[ACYL-CARRIER-PROTEIN]--UDP-N-ACETYLGLUCOSAMINE O-ACYLTRANSFERASE, MITOCHONDRIAL-RELATED"/>
    <property type="match status" value="1"/>
</dbReference>
<dbReference type="Pfam" id="PF13720">
    <property type="entry name" value="Acetyltransf_11"/>
    <property type="match status" value="1"/>
</dbReference>
<dbReference type="Pfam" id="PF00132">
    <property type="entry name" value="Hexapep"/>
    <property type="match status" value="2"/>
</dbReference>
<dbReference type="PIRSF" id="PIRSF000456">
    <property type="entry name" value="UDP-GlcNAc_acltr"/>
    <property type="match status" value="1"/>
</dbReference>
<dbReference type="SUPFAM" id="SSF51161">
    <property type="entry name" value="Trimeric LpxA-like enzymes"/>
    <property type="match status" value="1"/>
</dbReference>
<dbReference type="PROSITE" id="PS00101">
    <property type="entry name" value="HEXAPEP_TRANSFERASES"/>
    <property type="match status" value="1"/>
</dbReference>
<gene>
    <name evidence="1" type="primary">lpxA</name>
    <name type="ordered locus">PsycPRwf_1793</name>
</gene>
<reference key="1">
    <citation type="submission" date="2007-05" db="EMBL/GenBank/DDBJ databases">
        <title>Complete sequence of chromosome of Psychrobacter sp. PRwf-1.</title>
        <authorList>
            <consortium name="US DOE Joint Genome Institute"/>
            <person name="Copeland A."/>
            <person name="Lucas S."/>
            <person name="Lapidus A."/>
            <person name="Barry K."/>
            <person name="Detter J.C."/>
            <person name="Glavina del Rio T."/>
            <person name="Hammon N."/>
            <person name="Israni S."/>
            <person name="Dalin E."/>
            <person name="Tice H."/>
            <person name="Pitluck S."/>
            <person name="Chain P."/>
            <person name="Malfatti S."/>
            <person name="Shin M."/>
            <person name="Vergez L."/>
            <person name="Schmutz J."/>
            <person name="Larimer F."/>
            <person name="Land M."/>
            <person name="Hauser L."/>
            <person name="Kyrpides N."/>
            <person name="Kim E."/>
            <person name="Tiedje J."/>
            <person name="Richardson P."/>
        </authorList>
    </citation>
    <scope>NUCLEOTIDE SEQUENCE [LARGE SCALE GENOMIC DNA]</scope>
    <source>
        <strain>PRwf-1</strain>
    </source>
</reference>
<organism>
    <name type="scientific">Psychrobacter sp. (strain PRwf-1)</name>
    <dbReference type="NCBI Taxonomy" id="349106"/>
    <lineage>
        <taxon>Bacteria</taxon>
        <taxon>Pseudomonadati</taxon>
        <taxon>Pseudomonadota</taxon>
        <taxon>Gammaproteobacteria</taxon>
        <taxon>Moraxellales</taxon>
        <taxon>Moraxellaceae</taxon>
        <taxon>Psychrobacter</taxon>
    </lineage>
</organism>
<comment type="function">
    <text evidence="1">Involved in the biosynthesis of lipid A, a phosphorylated glycolipid that anchors the lipopolysaccharide to the outer membrane of the cell.</text>
</comment>
<comment type="catalytic activity">
    <reaction evidence="1">
        <text>a (3R)-hydroxyacyl-[ACP] + UDP-N-acetyl-alpha-D-glucosamine = a UDP-3-O-[(3R)-3-hydroxyacyl]-N-acetyl-alpha-D-glucosamine + holo-[ACP]</text>
        <dbReference type="Rhea" id="RHEA:67812"/>
        <dbReference type="Rhea" id="RHEA-COMP:9685"/>
        <dbReference type="Rhea" id="RHEA-COMP:9945"/>
        <dbReference type="ChEBI" id="CHEBI:57705"/>
        <dbReference type="ChEBI" id="CHEBI:64479"/>
        <dbReference type="ChEBI" id="CHEBI:78827"/>
        <dbReference type="ChEBI" id="CHEBI:173225"/>
        <dbReference type="EC" id="2.3.1.129"/>
    </reaction>
</comment>
<comment type="pathway">
    <text evidence="1">Glycolipid biosynthesis; lipid IV(A) biosynthesis; lipid IV(A) from (3R)-3-hydroxytetradecanoyl-[acyl-carrier-protein] and UDP-N-acetyl-alpha-D-glucosamine: step 1/6.</text>
</comment>
<comment type="subunit">
    <text evidence="1">Homotrimer.</text>
</comment>
<comment type="subcellular location">
    <subcellularLocation>
        <location evidence="1">Cytoplasm</location>
    </subcellularLocation>
</comment>
<comment type="similarity">
    <text evidence="1">Belongs to the transferase hexapeptide repeat family. LpxA subfamily.</text>
</comment>
<evidence type="ECO:0000255" key="1">
    <source>
        <dbReference type="HAMAP-Rule" id="MF_00387"/>
    </source>
</evidence>
<feature type="chain" id="PRO_1000072207" description="Acyl-[acyl-carrier-protein]--UDP-N-acetylglucosamine O-acyltransferase">
    <location>
        <begin position="1"/>
        <end position="259"/>
    </location>
</feature>
<proteinExistence type="inferred from homology"/>
<accession>A5WGE2</accession>
<keyword id="KW-0012">Acyltransferase</keyword>
<keyword id="KW-0963">Cytoplasm</keyword>
<keyword id="KW-0441">Lipid A biosynthesis</keyword>
<keyword id="KW-0444">Lipid biosynthesis</keyword>
<keyword id="KW-0443">Lipid metabolism</keyword>
<keyword id="KW-0677">Repeat</keyword>
<keyword id="KW-0808">Transferase</keyword>